<reference key="1">
    <citation type="submission" date="2007-04" db="EMBL/GenBank/DDBJ databases">
        <title>Genome sequence of the thermophilic hydrogen-producing bacterium Caldicellulosiruptor saccharolyticus DSM 8903.</title>
        <authorList>
            <person name="Copeland A."/>
            <person name="Lucas S."/>
            <person name="Lapidus A."/>
            <person name="Barry K."/>
            <person name="Detter J.C."/>
            <person name="Glavina del Rio T."/>
            <person name="Hammon N."/>
            <person name="Israni S."/>
            <person name="Dalin E."/>
            <person name="Tice H."/>
            <person name="Pitluck S."/>
            <person name="Kiss H."/>
            <person name="Brettin T."/>
            <person name="Bruce D."/>
            <person name="Han C."/>
            <person name="Schmutz J."/>
            <person name="Larimer F."/>
            <person name="Land M."/>
            <person name="Hauser L."/>
            <person name="Kyrpides N."/>
            <person name="Lykidis A."/>
            <person name="van de Werken H.J.G."/>
            <person name="Verhaart M.R.A."/>
            <person name="VanFossen A.L."/>
            <person name="Lewis D.L."/>
            <person name="Nichols J.D."/>
            <person name="Goorissen H.P."/>
            <person name="van Niel E.W.J."/>
            <person name="Stams F.J.M."/>
            <person name="Willquist K.U."/>
            <person name="Ward D.E."/>
            <person name="van der Oost J."/>
            <person name="Kelly R.M."/>
            <person name="Kengen S.M.W."/>
            <person name="Richardson P."/>
        </authorList>
    </citation>
    <scope>NUCLEOTIDE SEQUENCE [LARGE SCALE GENOMIC DNA]</scope>
    <source>
        <strain>ATCC 43494 / DSM 8903 / Tp8T 6331</strain>
    </source>
</reference>
<sequence>MEVRTRFAPSPTGHLHIGGARTALFNYLFAKRYGGKFILRIEDTDLERSSIESEKVIIESLRWLGIEWDEGVEVGGPYGPYRSTERVDIYKKYVDVLFEKGYAYYCYCTEEELEAQRQELLSKGQMPRYLGKCRNLTEDQKRRFEQEGRKPTVRFKVPEGVKIVVHDLVRGDVEFLSDDIGDFVIVKSDGIPTYNFAVVIDDHLMKISHVIRGEEHLSNTPRQILIYNALGFELPQFAHVSLILGKDRTKMSKRHGSTWVEQYRDQGYLKEGLINFLALLGWSPPEDREIFDMEYLIENFSLERVSKNPAIFDIDKLNYINSQHIKLKSLDELTQMCIPYFVEAGYIKEDEAKSKFEWLKKIVKSVYEGLDYLSQIKDRVDIFFNNEVKIEEDEAKEVLKWDHVKDLINVFENKIRQMNELTPEAIKLLFKEIQKETGYKGKNLFMPIRVALTGKTHGPELVEIIEIVGKENILKRLEFFKTWYN</sequence>
<name>SYE1_CALS8</name>
<accession>A4XHE0</accession>
<evidence type="ECO:0000255" key="1">
    <source>
        <dbReference type="HAMAP-Rule" id="MF_00022"/>
    </source>
</evidence>
<keyword id="KW-0030">Aminoacyl-tRNA synthetase</keyword>
<keyword id="KW-0067">ATP-binding</keyword>
<keyword id="KW-0963">Cytoplasm</keyword>
<keyword id="KW-0436">Ligase</keyword>
<keyword id="KW-0547">Nucleotide-binding</keyword>
<keyword id="KW-0648">Protein biosynthesis</keyword>
<comment type="function">
    <text evidence="1">Catalyzes the attachment of glutamate to tRNA(Glu) in a two-step reaction: glutamate is first activated by ATP to form Glu-AMP and then transferred to the acceptor end of tRNA(Glu).</text>
</comment>
<comment type="catalytic activity">
    <reaction evidence="1">
        <text>tRNA(Glu) + L-glutamate + ATP = L-glutamyl-tRNA(Glu) + AMP + diphosphate</text>
        <dbReference type="Rhea" id="RHEA:23540"/>
        <dbReference type="Rhea" id="RHEA-COMP:9663"/>
        <dbReference type="Rhea" id="RHEA-COMP:9680"/>
        <dbReference type="ChEBI" id="CHEBI:29985"/>
        <dbReference type="ChEBI" id="CHEBI:30616"/>
        <dbReference type="ChEBI" id="CHEBI:33019"/>
        <dbReference type="ChEBI" id="CHEBI:78442"/>
        <dbReference type="ChEBI" id="CHEBI:78520"/>
        <dbReference type="ChEBI" id="CHEBI:456215"/>
        <dbReference type="EC" id="6.1.1.17"/>
    </reaction>
</comment>
<comment type="subunit">
    <text evidence="1">Monomer.</text>
</comment>
<comment type="subcellular location">
    <subcellularLocation>
        <location evidence="1">Cytoplasm</location>
    </subcellularLocation>
</comment>
<comment type="similarity">
    <text evidence="1">Belongs to the class-I aminoacyl-tRNA synthetase family. Glutamate--tRNA ligase type 1 subfamily.</text>
</comment>
<gene>
    <name evidence="1" type="primary">gltX1</name>
    <name type="ordered locus">Csac_0706</name>
</gene>
<dbReference type="EC" id="6.1.1.17" evidence="1"/>
<dbReference type="EMBL" id="CP000679">
    <property type="protein sequence ID" value="ABP66325.1"/>
    <property type="molecule type" value="Genomic_DNA"/>
</dbReference>
<dbReference type="RefSeq" id="WP_011916274.1">
    <property type="nucleotide sequence ID" value="NC_009437.1"/>
</dbReference>
<dbReference type="SMR" id="A4XHE0"/>
<dbReference type="STRING" id="351627.Csac_0706"/>
<dbReference type="KEGG" id="csc:Csac_0706"/>
<dbReference type="eggNOG" id="COG0008">
    <property type="taxonomic scope" value="Bacteria"/>
</dbReference>
<dbReference type="eggNOG" id="COG1384">
    <property type="taxonomic scope" value="Bacteria"/>
</dbReference>
<dbReference type="HOGENOM" id="CLU_015768_6_3_9"/>
<dbReference type="Proteomes" id="UP000000256">
    <property type="component" value="Chromosome"/>
</dbReference>
<dbReference type="GO" id="GO:0005829">
    <property type="term" value="C:cytosol"/>
    <property type="evidence" value="ECO:0007669"/>
    <property type="project" value="TreeGrafter"/>
</dbReference>
<dbReference type="GO" id="GO:0005524">
    <property type="term" value="F:ATP binding"/>
    <property type="evidence" value="ECO:0007669"/>
    <property type="project" value="UniProtKB-UniRule"/>
</dbReference>
<dbReference type="GO" id="GO:0004818">
    <property type="term" value="F:glutamate-tRNA ligase activity"/>
    <property type="evidence" value="ECO:0007669"/>
    <property type="project" value="UniProtKB-UniRule"/>
</dbReference>
<dbReference type="GO" id="GO:0000049">
    <property type="term" value="F:tRNA binding"/>
    <property type="evidence" value="ECO:0007669"/>
    <property type="project" value="InterPro"/>
</dbReference>
<dbReference type="GO" id="GO:0008270">
    <property type="term" value="F:zinc ion binding"/>
    <property type="evidence" value="ECO:0007669"/>
    <property type="project" value="InterPro"/>
</dbReference>
<dbReference type="GO" id="GO:0006424">
    <property type="term" value="P:glutamyl-tRNA aminoacylation"/>
    <property type="evidence" value="ECO:0007669"/>
    <property type="project" value="UniProtKB-UniRule"/>
</dbReference>
<dbReference type="CDD" id="cd00808">
    <property type="entry name" value="GluRS_core"/>
    <property type="match status" value="1"/>
</dbReference>
<dbReference type="FunFam" id="1.10.10.350:FF:000002">
    <property type="entry name" value="Glutamate--tRNA ligase"/>
    <property type="match status" value="1"/>
</dbReference>
<dbReference type="FunFam" id="3.40.50.620:FF:000045">
    <property type="entry name" value="Glutamate--tRNA ligase, mitochondrial"/>
    <property type="match status" value="1"/>
</dbReference>
<dbReference type="Gene3D" id="1.10.10.350">
    <property type="match status" value="1"/>
</dbReference>
<dbReference type="Gene3D" id="1.10.8.70">
    <property type="entry name" value="Glutamate-tRNA synthetase, class I, anticodon-binding domain 1"/>
    <property type="match status" value="1"/>
</dbReference>
<dbReference type="Gene3D" id="3.40.50.620">
    <property type="entry name" value="HUPs"/>
    <property type="match status" value="1"/>
</dbReference>
<dbReference type="HAMAP" id="MF_00022">
    <property type="entry name" value="Glu_tRNA_synth_type1"/>
    <property type="match status" value="1"/>
</dbReference>
<dbReference type="InterPro" id="IPR045462">
    <property type="entry name" value="aa-tRNA-synth_I_cd-bd"/>
</dbReference>
<dbReference type="InterPro" id="IPR020751">
    <property type="entry name" value="aa-tRNA-synth_I_codon-bd_sub2"/>
</dbReference>
<dbReference type="InterPro" id="IPR001412">
    <property type="entry name" value="aa-tRNA-synth_I_CS"/>
</dbReference>
<dbReference type="InterPro" id="IPR008925">
    <property type="entry name" value="aa_tRNA-synth_I_cd-bd_sf"/>
</dbReference>
<dbReference type="InterPro" id="IPR004527">
    <property type="entry name" value="Glu-tRNA-ligase_bac/mito"/>
</dbReference>
<dbReference type="InterPro" id="IPR020752">
    <property type="entry name" value="Glu-tRNA-synth_I_codon-bd_sub1"/>
</dbReference>
<dbReference type="InterPro" id="IPR000924">
    <property type="entry name" value="Glu/Gln-tRNA-synth"/>
</dbReference>
<dbReference type="InterPro" id="IPR020058">
    <property type="entry name" value="Glu/Gln-tRNA-synth_Ib_cat-dom"/>
</dbReference>
<dbReference type="InterPro" id="IPR049940">
    <property type="entry name" value="GluQ/Sye"/>
</dbReference>
<dbReference type="InterPro" id="IPR033910">
    <property type="entry name" value="GluRS_core"/>
</dbReference>
<dbReference type="InterPro" id="IPR014729">
    <property type="entry name" value="Rossmann-like_a/b/a_fold"/>
</dbReference>
<dbReference type="NCBIfam" id="TIGR00464">
    <property type="entry name" value="gltX_bact"/>
    <property type="match status" value="1"/>
</dbReference>
<dbReference type="PANTHER" id="PTHR43311">
    <property type="entry name" value="GLUTAMATE--TRNA LIGASE"/>
    <property type="match status" value="1"/>
</dbReference>
<dbReference type="PANTHER" id="PTHR43311:SF2">
    <property type="entry name" value="GLUTAMATE--TRNA LIGASE, MITOCHONDRIAL-RELATED"/>
    <property type="match status" value="1"/>
</dbReference>
<dbReference type="Pfam" id="PF19269">
    <property type="entry name" value="Anticodon_2"/>
    <property type="match status" value="1"/>
</dbReference>
<dbReference type="Pfam" id="PF00749">
    <property type="entry name" value="tRNA-synt_1c"/>
    <property type="match status" value="1"/>
</dbReference>
<dbReference type="PRINTS" id="PR00987">
    <property type="entry name" value="TRNASYNTHGLU"/>
</dbReference>
<dbReference type="SUPFAM" id="SSF48163">
    <property type="entry name" value="An anticodon-binding domain of class I aminoacyl-tRNA synthetases"/>
    <property type="match status" value="1"/>
</dbReference>
<dbReference type="SUPFAM" id="SSF52374">
    <property type="entry name" value="Nucleotidylyl transferase"/>
    <property type="match status" value="1"/>
</dbReference>
<dbReference type="PROSITE" id="PS00178">
    <property type="entry name" value="AA_TRNA_LIGASE_I"/>
    <property type="match status" value="1"/>
</dbReference>
<proteinExistence type="inferred from homology"/>
<feature type="chain" id="PRO_0000367631" description="Glutamate--tRNA ligase 1">
    <location>
        <begin position="1"/>
        <end position="485"/>
    </location>
</feature>
<feature type="short sequence motif" description="'HIGH' region" evidence="1">
    <location>
        <begin position="9"/>
        <end position="19"/>
    </location>
</feature>
<feature type="short sequence motif" description="'KMSKS' region" evidence="1">
    <location>
        <begin position="250"/>
        <end position="254"/>
    </location>
</feature>
<feature type="binding site" evidence="1">
    <location>
        <position position="253"/>
    </location>
    <ligand>
        <name>ATP</name>
        <dbReference type="ChEBI" id="CHEBI:30616"/>
    </ligand>
</feature>
<protein>
    <recommendedName>
        <fullName evidence="1">Glutamate--tRNA ligase 1</fullName>
        <ecNumber evidence="1">6.1.1.17</ecNumber>
    </recommendedName>
    <alternativeName>
        <fullName evidence="1">Glutamyl-tRNA synthetase 1</fullName>
        <shortName evidence="1">GluRS 1</shortName>
    </alternativeName>
</protein>
<organism>
    <name type="scientific">Caldicellulosiruptor saccharolyticus (strain ATCC 43494 / DSM 8903 / Tp8T 6331)</name>
    <dbReference type="NCBI Taxonomy" id="351627"/>
    <lineage>
        <taxon>Bacteria</taxon>
        <taxon>Bacillati</taxon>
        <taxon>Bacillota</taxon>
        <taxon>Bacillota incertae sedis</taxon>
        <taxon>Caldicellulosiruptorales</taxon>
        <taxon>Caldicellulosiruptoraceae</taxon>
        <taxon>Caldicellulosiruptor</taxon>
    </lineage>
</organism>